<accession>P10733</accession>
<accession>Q1ZXC7</accession>
<reference key="1">
    <citation type="journal article" date="1988" name="J. Biol. Chem.">
        <title>Severin, gelsolin, and villin share a homologous sequence in regions presumed to contain F-actin severing domains.</title>
        <authorList>
            <person name="Andre E."/>
            <person name="Lottspeich F."/>
            <person name="Schleicher M."/>
            <person name="Noegel A."/>
        </authorList>
    </citation>
    <scope>NUCLEOTIDE SEQUENCE [MRNA]</scope>
    <scope>PARTIAL PROTEIN SEQUENCE</scope>
</reference>
<reference key="2">
    <citation type="journal article" date="2005" name="Nature">
        <title>The genome of the social amoeba Dictyostelium discoideum.</title>
        <authorList>
            <person name="Eichinger L."/>
            <person name="Pachebat J.A."/>
            <person name="Gloeckner G."/>
            <person name="Rajandream M.A."/>
            <person name="Sucgang R."/>
            <person name="Berriman M."/>
            <person name="Song J."/>
            <person name="Olsen R."/>
            <person name="Szafranski K."/>
            <person name="Xu Q."/>
            <person name="Tunggal B."/>
            <person name="Kummerfeld S."/>
            <person name="Madera M."/>
            <person name="Konfortov B.A."/>
            <person name="Rivero F."/>
            <person name="Bankier A.T."/>
            <person name="Lehmann R."/>
            <person name="Hamlin N."/>
            <person name="Davies R."/>
            <person name="Gaudet P."/>
            <person name="Fey P."/>
            <person name="Pilcher K."/>
            <person name="Chen G."/>
            <person name="Saunders D."/>
            <person name="Sodergren E.J."/>
            <person name="Davis P."/>
            <person name="Kerhornou A."/>
            <person name="Nie X."/>
            <person name="Hall N."/>
            <person name="Anjard C."/>
            <person name="Hemphill L."/>
            <person name="Bason N."/>
            <person name="Farbrother P."/>
            <person name="Desany B."/>
            <person name="Just E."/>
            <person name="Morio T."/>
            <person name="Rost R."/>
            <person name="Churcher C.M."/>
            <person name="Cooper J."/>
            <person name="Haydock S."/>
            <person name="van Driessche N."/>
            <person name="Cronin A."/>
            <person name="Goodhead I."/>
            <person name="Muzny D.M."/>
            <person name="Mourier T."/>
            <person name="Pain A."/>
            <person name="Lu M."/>
            <person name="Harper D."/>
            <person name="Lindsay R."/>
            <person name="Hauser H."/>
            <person name="James K.D."/>
            <person name="Quiles M."/>
            <person name="Madan Babu M."/>
            <person name="Saito T."/>
            <person name="Buchrieser C."/>
            <person name="Wardroper A."/>
            <person name="Felder M."/>
            <person name="Thangavelu M."/>
            <person name="Johnson D."/>
            <person name="Knights A."/>
            <person name="Loulseged H."/>
            <person name="Mungall K.L."/>
            <person name="Oliver K."/>
            <person name="Price C."/>
            <person name="Quail M.A."/>
            <person name="Urushihara H."/>
            <person name="Hernandez J."/>
            <person name="Rabbinowitsch E."/>
            <person name="Steffen D."/>
            <person name="Sanders M."/>
            <person name="Ma J."/>
            <person name="Kohara Y."/>
            <person name="Sharp S."/>
            <person name="Simmonds M.N."/>
            <person name="Spiegler S."/>
            <person name="Tivey A."/>
            <person name="Sugano S."/>
            <person name="White B."/>
            <person name="Walker D."/>
            <person name="Woodward J.R."/>
            <person name="Winckler T."/>
            <person name="Tanaka Y."/>
            <person name="Shaulsky G."/>
            <person name="Schleicher M."/>
            <person name="Weinstock G.M."/>
            <person name="Rosenthal A."/>
            <person name="Cox E.C."/>
            <person name="Chisholm R.L."/>
            <person name="Gibbs R.A."/>
            <person name="Loomis W.F."/>
            <person name="Platzer M."/>
            <person name="Kay R.R."/>
            <person name="Williams J.G."/>
            <person name="Dear P.H."/>
            <person name="Noegel A.A."/>
            <person name="Barrell B.G."/>
            <person name="Kuspa A."/>
        </authorList>
    </citation>
    <scope>NUCLEOTIDE SEQUENCE [LARGE SCALE GENOMIC DNA]</scope>
    <source>
        <strain>AX4</strain>
    </source>
</reference>
<reference key="3">
    <citation type="journal article" date="1991" name="J. Cell Biol.">
        <title>Domain structure in actin-binding proteins: expression and functional characterization of truncated severin.</title>
        <authorList>
            <person name="Eichinger L."/>
            <person name="Noegel A.A."/>
            <person name="Schleicher M."/>
        </authorList>
    </citation>
    <scope>INTERACTION WITH ACTIN</scope>
</reference>
<reference key="4">
    <citation type="journal article" date="2006" name="Mol. Cell. Proteomics">
        <title>Proteomics fingerprinting of phagosome maturation and evidence for the role of a Galpha during uptake.</title>
        <authorList>
            <person name="Gotthardt D."/>
            <person name="Blancheteau V."/>
            <person name="Bosserhoff A."/>
            <person name="Ruppert T."/>
            <person name="Delorenzi M."/>
            <person name="Soldati T."/>
        </authorList>
    </citation>
    <scope>IDENTIFICATION BY MASS SPECTROMETRY [LARGE SCALE ANALYSIS]</scope>
    <source>
        <strain>AX2</strain>
    </source>
</reference>
<reference key="5">
    <citation type="journal article" date="1995" name="J. Mol. Biol.">
        <title>Structure of severin domain 2 in solution.</title>
        <authorList>
            <person name="Schnuchel A."/>
            <person name="Wiltscheck R."/>
            <person name="Eichinger L."/>
            <person name="Schleicher M."/>
            <person name="Holak T.A."/>
        </authorList>
    </citation>
    <scope>STRUCTURE BY NMR OF 149-262</scope>
</reference>
<reference key="6">
    <citation type="journal article" date="2000" name="Biochemistry">
        <title>Mapping the functional surface of domain 2 in the gelsolin superfamily.</title>
        <authorList>
            <person name="Puius Y.A."/>
            <person name="Fedorov E.V."/>
            <person name="Eichinger L."/>
            <person name="Schleicher M."/>
            <person name="Almo S.C."/>
        </authorList>
    </citation>
    <scope>X-RAY CRYSTALLOGRAPHY (1.75 ANGSTROMS) OF 158-259</scope>
</reference>
<gene>
    <name type="primary">sevA</name>
    <name type="ORF">DDB_G0289327</name>
</gene>
<dbReference type="EMBL" id="J03515">
    <property type="protein sequence ID" value="AAA33250.1"/>
    <property type="molecule type" value="mRNA"/>
</dbReference>
<dbReference type="EMBL" id="AAFI02000139">
    <property type="protein sequence ID" value="EAS66832.1"/>
    <property type="molecule type" value="Genomic_DNA"/>
</dbReference>
<dbReference type="PIR" id="A28517">
    <property type="entry name" value="A28517"/>
</dbReference>
<dbReference type="RefSeq" id="XP_001134515.1">
    <property type="nucleotide sequence ID" value="XM_001134515.1"/>
</dbReference>
<dbReference type="PDB" id="1SVQ">
    <property type="method" value="NMR"/>
    <property type="chains" value="A=149-262"/>
</dbReference>
<dbReference type="PDB" id="1SVR">
    <property type="method" value="NMR"/>
    <property type="chains" value="A=149-262"/>
</dbReference>
<dbReference type="PDB" id="1SVY">
    <property type="method" value="X-ray"/>
    <property type="resolution" value="1.75 A"/>
    <property type="chains" value="A=149-262"/>
</dbReference>
<dbReference type="PDBsum" id="1SVQ"/>
<dbReference type="PDBsum" id="1SVR"/>
<dbReference type="PDBsum" id="1SVY"/>
<dbReference type="SMR" id="P10733"/>
<dbReference type="FunCoup" id="P10733">
    <property type="interactions" value="12"/>
</dbReference>
<dbReference type="STRING" id="44689.P10733"/>
<dbReference type="PaxDb" id="44689-DDB0232954"/>
<dbReference type="EnsemblProtists" id="EAS66832">
    <property type="protein sequence ID" value="EAS66832"/>
    <property type="gene ID" value="DDB_G0289327"/>
</dbReference>
<dbReference type="GeneID" id="8627096"/>
<dbReference type="KEGG" id="ddi:DDB_G0289327"/>
<dbReference type="dictyBase" id="DDB_G0289327">
    <property type="gene designation" value="sevA"/>
</dbReference>
<dbReference type="VEuPathDB" id="AmoebaDB:DDB_G0289327"/>
<dbReference type="eggNOG" id="KOG0443">
    <property type="taxonomic scope" value="Eukaryota"/>
</dbReference>
<dbReference type="HOGENOM" id="CLU_002568_0_1_1"/>
<dbReference type="InParanoid" id="P10733"/>
<dbReference type="OMA" id="HDMTLAK"/>
<dbReference type="PhylomeDB" id="P10733"/>
<dbReference type="Reactome" id="R-DDI-6798695">
    <property type="pathway name" value="Neutrophil degranulation"/>
</dbReference>
<dbReference type="EvolutionaryTrace" id="P10733"/>
<dbReference type="PRO" id="PR:P10733"/>
<dbReference type="Proteomes" id="UP000002195">
    <property type="component" value="Chromosome 5"/>
</dbReference>
<dbReference type="GO" id="GO:0015629">
    <property type="term" value="C:actin cytoskeleton"/>
    <property type="evidence" value="ECO:0000318"/>
    <property type="project" value="GO_Central"/>
</dbReference>
<dbReference type="GO" id="GO:0005737">
    <property type="term" value="C:cytoplasm"/>
    <property type="evidence" value="ECO:0000318"/>
    <property type="project" value="GO_Central"/>
</dbReference>
<dbReference type="GO" id="GO:0045335">
    <property type="term" value="C:phagocytic vesicle"/>
    <property type="evidence" value="ECO:0007005"/>
    <property type="project" value="dictyBase"/>
</dbReference>
<dbReference type="GO" id="GO:0051015">
    <property type="term" value="F:actin filament binding"/>
    <property type="evidence" value="ECO:0000314"/>
    <property type="project" value="dictyBase"/>
</dbReference>
<dbReference type="GO" id="GO:0003789">
    <property type="term" value="F:actin filament severing activity"/>
    <property type="evidence" value="ECO:0000314"/>
    <property type="project" value="dictyBase"/>
</dbReference>
<dbReference type="GO" id="GO:0003785">
    <property type="term" value="F:actin monomer binding"/>
    <property type="evidence" value="ECO:0000314"/>
    <property type="project" value="dictyBase"/>
</dbReference>
<dbReference type="GO" id="GO:0005509">
    <property type="term" value="F:calcium ion binding"/>
    <property type="evidence" value="ECO:0000314"/>
    <property type="project" value="dictyBase"/>
</dbReference>
<dbReference type="GO" id="GO:0048306">
    <property type="term" value="F:calcium-dependent protein binding"/>
    <property type="evidence" value="ECO:0000304"/>
    <property type="project" value="dictyBase"/>
</dbReference>
<dbReference type="GO" id="GO:0005546">
    <property type="term" value="F:phosphatidylinositol-4,5-bisphosphate binding"/>
    <property type="evidence" value="ECO:0000314"/>
    <property type="project" value="dictyBase"/>
</dbReference>
<dbReference type="GO" id="GO:0051017">
    <property type="term" value="P:actin filament bundle assembly"/>
    <property type="evidence" value="ECO:0000314"/>
    <property type="project" value="dictyBase"/>
</dbReference>
<dbReference type="GO" id="GO:0030043">
    <property type="term" value="P:actin filament fragmentation"/>
    <property type="evidence" value="ECO:0000314"/>
    <property type="project" value="dictyBase"/>
</dbReference>
<dbReference type="GO" id="GO:0051014">
    <property type="term" value="P:actin filament severing"/>
    <property type="evidence" value="ECO:0000314"/>
    <property type="project" value="dictyBase"/>
</dbReference>
<dbReference type="GO" id="GO:0008154">
    <property type="term" value="P:actin polymerization or depolymerization"/>
    <property type="evidence" value="ECO:0000318"/>
    <property type="project" value="GO_Central"/>
</dbReference>
<dbReference type="GO" id="GO:0051016">
    <property type="term" value="P:barbed-end actin filament capping"/>
    <property type="evidence" value="ECO:0000314"/>
    <property type="project" value="dictyBase"/>
</dbReference>
<dbReference type="CDD" id="cd11290">
    <property type="entry name" value="gelsolin_S1_like"/>
    <property type="match status" value="1"/>
</dbReference>
<dbReference type="CDD" id="cd11289">
    <property type="entry name" value="gelsolin_S2_like"/>
    <property type="match status" value="1"/>
</dbReference>
<dbReference type="CDD" id="cd11292">
    <property type="entry name" value="gelsolin_S3_like"/>
    <property type="match status" value="1"/>
</dbReference>
<dbReference type="FunFam" id="3.40.20.10:FF:000037">
    <property type="entry name" value="macrophage-capping protein-like isoform X2"/>
    <property type="match status" value="1"/>
</dbReference>
<dbReference type="FunFam" id="3.40.20.10:FF:000043">
    <property type="entry name" value="macrophage-capping protein-like isoform X2"/>
    <property type="match status" value="1"/>
</dbReference>
<dbReference type="Gene3D" id="3.40.20.10">
    <property type="entry name" value="Severin"/>
    <property type="match status" value="3"/>
</dbReference>
<dbReference type="InterPro" id="IPR029006">
    <property type="entry name" value="ADF-H/Gelsolin-like_dom_sf"/>
</dbReference>
<dbReference type="InterPro" id="IPR007123">
    <property type="entry name" value="Gelsolin-like_dom"/>
</dbReference>
<dbReference type="InterPro" id="IPR007122">
    <property type="entry name" value="Villin/Gelsolin"/>
</dbReference>
<dbReference type="PANTHER" id="PTHR11977:SF130">
    <property type="entry name" value="SEVERIN"/>
    <property type="match status" value="1"/>
</dbReference>
<dbReference type="PANTHER" id="PTHR11977">
    <property type="entry name" value="VILLIN"/>
    <property type="match status" value="1"/>
</dbReference>
<dbReference type="Pfam" id="PF00626">
    <property type="entry name" value="Gelsolin"/>
    <property type="match status" value="3"/>
</dbReference>
<dbReference type="PRINTS" id="PR00597">
    <property type="entry name" value="GELSOLIN"/>
</dbReference>
<dbReference type="SMART" id="SM00262">
    <property type="entry name" value="GEL"/>
    <property type="match status" value="3"/>
</dbReference>
<dbReference type="SUPFAM" id="SSF55753">
    <property type="entry name" value="Actin depolymerizing proteins"/>
    <property type="match status" value="3"/>
</dbReference>
<evidence type="ECO:0000250" key="1"/>
<evidence type="ECO:0000305" key="2"/>
<evidence type="ECO:0007829" key="3">
    <source>
        <dbReference type="PDB" id="1SVY"/>
    </source>
</evidence>
<proteinExistence type="evidence at protein level"/>
<name>SEVE_DICDI</name>
<organism>
    <name type="scientific">Dictyostelium discoideum</name>
    <name type="common">Social amoeba</name>
    <dbReference type="NCBI Taxonomy" id="44689"/>
    <lineage>
        <taxon>Eukaryota</taxon>
        <taxon>Amoebozoa</taxon>
        <taxon>Evosea</taxon>
        <taxon>Eumycetozoa</taxon>
        <taxon>Dictyostelia</taxon>
        <taxon>Dictyosteliales</taxon>
        <taxon>Dictyosteliaceae</taxon>
        <taxon>Dictyostelium</taxon>
    </lineage>
</organism>
<keyword id="KW-0002">3D-structure</keyword>
<keyword id="KW-0117">Actin capping</keyword>
<keyword id="KW-0009">Actin-binding</keyword>
<keyword id="KW-0106">Calcium</keyword>
<keyword id="KW-0903">Direct protein sequencing</keyword>
<keyword id="KW-1185">Reference proteome</keyword>
<keyword id="KW-0677">Repeat</keyword>
<sequence>MIKNRKLDITSTNVAGIGTDLDKKCRLDAASTEAQWKGVGQAPGLKIWRIENFKVVPVPESSYGKFYDGDSYIILHTFKEGNSLKHDIHFFLGTFTTQDEAGTAAYKTVELDDFLGGAPIQYRQCQSYESPSFLSLFPKYFILSGGVESGFNHVKPTEYKPRLLHISGDKNAKVAEVPLATSSLNSGDCFLLDAGLTIYQFNGSKSSPQEKNKAAEVARAIDAERKGLPKVEVFCETDSDIPAEFWKLLGGKGAIAAKHETAPTKSEKVLYKLSDASGSLKFSEVSRGKINKSSLKSEDVFIIDLGNEIYTWIGSKSSPNEKKTAFSHATQYLVNNKRCEYTPIVRVLENGTNQSFETLLSA</sequence>
<feature type="chain" id="PRO_0000218747" description="Severin">
    <location>
        <begin position="1"/>
        <end position="362"/>
    </location>
</feature>
<feature type="repeat" description="Gelsolin-like 1">
    <location>
        <begin position="53"/>
        <end position="102"/>
    </location>
</feature>
<feature type="repeat" description="Gelsolin-like 2">
    <location>
        <begin position="172"/>
        <end position="212"/>
    </location>
</feature>
<feature type="repeat" description="Gelsolin-like 3">
    <location>
        <begin position="280"/>
        <end position="323"/>
    </location>
</feature>
<feature type="binding site" evidence="1">
    <location>
        <begin position="162"/>
        <end position="170"/>
    </location>
    <ligand>
        <name>a 1,2-diacyl-sn-glycero-3-phospho-(1D-myo-inositol-4,5-bisphosphate)</name>
        <dbReference type="ChEBI" id="CHEBI:58456"/>
    </ligand>
</feature>
<feature type="strand" evidence="3">
    <location>
        <begin position="162"/>
        <end position="167"/>
    </location>
</feature>
<feature type="strand" evidence="3">
    <location>
        <begin position="173"/>
        <end position="177"/>
    </location>
</feature>
<feature type="helix" evidence="3">
    <location>
        <begin position="181"/>
        <end position="183"/>
    </location>
</feature>
<feature type="strand" evidence="3">
    <location>
        <begin position="188"/>
        <end position="193"/>
    </location>
</feature>
<feature type="strand" evidence="3">
    <location>
        <begin position="195"/>
        <end position="202"/>
    </location>
</feature>
<feature type="helix" evidence="3">
    <location>
        <begin position="208"/>
        <end position="224"/>
    </location>
</feature>
<feature type="turn" evidence="3">
    <location>
        <begin position="225"/>
        <end position="227"/>
    </location>
</feature>
<feature type="strand" evidence="3">
    <location>
        <begin position="229"/>
        <end position="235"/>
    </location>
</feature>
<feature type="helix" evidence="3">
    <location>
        <begin position="243"/>
        <end position="248"/>
    </location>
</feature>
<comment type="function">
    <text>Severin blocks the ends of F-actin and causes the fragmentation and depolymerization of actin filaments in a Ca(2+) dependent manner.</text>
</comment>
<comment type="miscellaneous">
    <text>Severin changes its conformation upon binding of Ca(2+) and then interacts with F-actin.</text>
</comment>
<comment type="similarity">
    <text evidence="2">Belongs to the villin/gelsolin family.</text>
</comment>
<protein>
    <recommendedName>
        <fullName>Severin</fullName>
    </recommendedName>
</protein>